<sequence>MTVHIDGIVAIVLFYLLILFVGLWAAWKSKNTSMEGAMDRSEAIMIGGRDIGLLVGGFTMTATWVGGGYINGTAEAVYVPGYGLAWAQAPFGYALSLVIGGLFFAKPMRSRGYVTMLDPFQQMYGKRMGGLLFIPALLGEIFWSAAILSALGATLSVIVDININVSVVVSAVIAVLYTLVGGLYSVAYTDVVQLFCIFLGLWISIPFALLNPAVTDIIVTANQEVYQEPWVGNIQSKDSLIWIDNFLLLMLGGIPWQVYFQRVLSASSATYAQVLSFLAAFGCVLMAIPSVLIGAIGTSTDWNQTSYGLPGPIGKNETDMILPIVLQHLCPPYISFFGLGAVSAAVMSSADSSILSASSMFARNIYHLAFRQEASDKEIVWVMRITIFLFGGAATSMALLAQSIYGLWYLSSDLVYVIIFPQLISVLFVKGTNTYGSIAGYIIGFLLRISGGEPYLHMQPFIYYPGCYLDHSFGDDPVYVQRFPFKTMAMLFSFLGNTGVSYLVKYLFVSGILPPKLDFLDSVVSKHSKEIMDKTFLMNQDNITLSELVHVNPIHSASVSAALTNKEAFEDIEPNPELSKSGND</sequence>
<organism>
    <name type="scientific">Torpedo marmorata</name>
    <name type="common">Marbled electric ray</name>
    <dbReference type="NCBI Taxonomy" id="7788"/>
    <lineage>
        <taxon>Eukaryota</taxon>
        <taxon>Metazoa</taxon>
        <taxon>Chordata</taxon>
        <taxon>Craniata</taxon>
        <taxon>Vertebrata</taxon>
        <taxon>Chondrichthyes</taxon>
        <taxon>Elasmobranchii</taxon>
        <taxon>Batoidea</taxon>
        <taxon>Torpediniformes</taxon>
        <taxon>Torpedinidae</taxon>
        <taxon>Torpedo</taxon>
    </lineage>
</organism>
<name>SC5A7_TORMA</name>
<keyword id="KW-0325">Glycoprotein</keyword>
<keyword id="KW-0406">Ion transport</keyword>
<keyword id="KW-0472">Membrane</keyword>
<keyword id="KW-0530">Neurotransmitter biosynthesis</keyword>
<keyword id="KW-0597">Phosphoprotein</keyword>
<keyword id="KW-0915">Sodium</keyword>
<keyword id="KW-0739">Sodium transport</keyword>
<keyword id="KW-0769">Symport</keyword>
<keyword id="KW-0812">Transmembrane</keyword>
<keyword id="KW-1133">Transmembrane helix</keyword>
<keyword id="KW-0813">Transport</keyword>
<evidence type="ECO:0000250" key="1"/>
<evidence type="ECO:0000255" key="2"/>
<evidence type="ECO:0000269" key="3">
    <source>
    </source>
</evidence>
<evidence type="ECO:0000305" key="4"/>
<reference key="1">
    <citation type="journal article" date="2002" name="J. Neurochem.">
        <title>The neuronal choline transporter CHT1 is regulated by immunosuppressor-sensitive pathways.</title>
        <authorList>
            <person name="Lane-Guermonprez L."/>
            <person name="O'Regan S."/>
            <person name="Meunier F.-M."/>
            <person name="Morot-Gaudry-Talarmain Y."/>
        </authorList>
    </citation>
    <scope>NUCLEOTIDE SEQUENCE [MRNA]</scope>
    <scope>FUNCTION</scope>
    <scope>TISSUE SPECIFICITY</scope>
    <source>
        <tissue>Electric lobe</tissue>
    </source>
</reference>
<protein>
    <recommendedName>
        <fullName>High-affinity choline transporter 1</fullName>
    </recommendedName>
</protein>
<dbReference type="EMBL" id="AJ420808">
    <property type="protein sequence ID" value="CAD12727.1"/>
    <property type="molecule type" value="mRNA"/>
</dbReference>
<dbReference type="SMR" id="Q8UWF0"/>
<dbReference type="GlyCosmos" id="Q8UWF0">
    <property type="glycosylation" value="1 site, No reported glycans"/>
</dbReference>
<dbReference type="GO" id="GO:0030424">
    <property type="term" value="C:axon"/>
    <property type="evidence" value="ECO:0007669"/>
    <property type="project" value="TreeGrafter"/>
</dbReference>
<dbReference type="GO" id="GO:0030425">
    <property type="term" value="C:dendrite"/>
    <property type="evidence" value="ECO:0007669"/>
    <property type="project" value="TreeGrafter"/>
</dbReference>
<dbReference type="GO" id="GO:0016020">
    <property type="term" value="C:membrane"/>
    <property type="evidence" value="ECO:0000303"/>
    <property type="project" value="UniProtKB"/>
</dbReference>
<dbReference type="GO" id="GO:0043204">
    <property type="term" value="C:perikaryon"/>
    <property type="evidence" value="ECO:0007669"/>
    <property type="project" value="TreeGrafter"/>
</dbReference>
<dbReference type="GO" id="GO:0005886">
    <property type="term" value="C:plasma membrane"/>
    <property type="evidence" value="ECO:0007669"/>
    <property type="project" value="TreeGrafter"/>
</dbReference>
<dbReference type="GO" id="GO:0045202">
    <property type="term" value="C:synapse"/>
    <property type="evidence" value="ECO:0007669"/>
    <property type="project" value="TreeGrafter"/>
</dbReference>
<dbReference type="GO" id="GO:0015220">
    <property type="term" value="F:choline transmembrane transporter activity"/>
    <property type="evidence" value="ECO:0000315"/>
    <property type="project" value="UniProtKB"/>
</dbReference>
<dbReference type="GO" id="GO:0005307">
    <property type="term" value="F:choline:sodium symporter activity"/>
    <property type="evidence" value="ECO:0007669"/>
    <property type="project" value="TreeGrafter"/>
</dbReference>
<dbReference type="GO" id="GO:0008292">
    <property type="term" value="P:acetylcholine biosynthetic process"/>
    <property type="evidence" value="ECO:0000315"/>
    <property type="project" value="UniProtKB"/>
</dbReference>
<dbReference type="GO" id="GO:0007274">
    <property type="term" value="P:neuromuscular synaptic transmission"/>
    <property type="evidence" value="ECO:0007669"/>
    <property type="project" value="TreeGrafter"/>
</dbReference>
<dbReference type="GO" id="GO:0007271">
    <property type="term" value="P:synaptic transmission, cholinergic"/>
    <property type="evidence" value="ECO:0007669"/>
    <property type="project" value="TreeGrafter"/>
</dbReference>
<dbReference type="CDD" id="cd11474">
    <property type="entry name" value="SLC5sbd_CHT"/>
    <property type="match status" value="1"/>
</dbReference>
<dbReference type="FunFam" id="1.20.1730.10:FF:000008">
    <property type="entry name" value="High affinity choline transporter 1"/>
    <property type="match status" value="1"/>
</dbReference>
<dbReference type="Gene3D" id="1.20.1730.10">
    <property type="entry name" value="Sodium/glucose cotransporter"/>
    <property type="match status" value="1"/>
</dbReference>
<dbReference type="InterPro" id="IPR052244">
    <property type="entry name" value="Choline_transporter"/>
</dbReference>
<dbReference type="InterPro" id="IPR038377">
    <property type="entry name" value="Na/Glc_symporter_sf"/>
</dbReference>
<dbReference type="InterPro" id="IPR001734">
    <property type="entry name" value="Na/solute_symporter"/>
</dbReference>
<dbReference type="PANTHER" id="PTHR45897:SF2">
    <property type="entry name" value="HIGH AFFINITY CHOLINE TRANSPORTER 1"/>
    <property type="match status" value="1"/>
</dbReference>
<dbReference type="PANTHER" id="PTHR45897">
    <property type="entry name" value="HIGH-AFFINITY CHOLINE TRANSPORTER 1"/>
    <property type="match status" value="1"/>
</dbReference>
<dbReference type="Pfam" id="PF00474">
    <property type="entry name" value="SSF"/>
    <property type="match status" value="1"/>
</dbReference>
<dbReference type="PROSITE" id="PS50283">
    <property type="entry name" value="NA_SOLUT_SYMP_3"/>
    <property type="match status" value="1"/>
</dbReference>
<gene>
    <name type="primary">CHT1</name>
</gene>
<feature type="chain" id="PRO_0000105394" description="High-affinity choline transporter 1">
    <location>
        <begin position="1"/>
        <end position="584"/>
    </location>
</feature>
<feature type="topological domain" description="Extracellular" evidence="2">
    <location>
        <begin position="1"/>
        <end position="6"/>
    </location>
</feature>
<feature type="transmembrane region" description="Helical" evidence="2">
    <location>
        <begin position="7"/>
        <end position="27"/>
    </location>
</feature>
<feature type="topological domain" description="Cytoplasmic" evidence="2">
    <location>
        <begin position="28"/>
        <end position="50"/>
    </location>
</feature>
<feature type="transmembrane region" description="Helical" evidence="2">
    <location>
        <begin position="51"/>
        <end position="71"/>
    </location>
</feature>
<feature type="topological domain" description="Extracellular" evidence="2">
    <location>
        <begin position="72"/>
        <end position="83"/>
    </location>
</feature>
<feature type="transmembrane region" description="Helical" evidence="2">
    <location>
        <begin position="84"/>
        <end position="104"/>
    </location>
</feature>
<feature type="topological domain" description="Cytoplasmic" evidence="2">
    <location>
        <begin position="105"/>
        <end position="127"/>
    </location>
</feature>
<feature type="transmembrane region" description="Helical" evidence="2">
    <location>
        <begin position="128"/>
        <end position="148"/>
    </location>
</feature>
<feature type="topological domain" description="Extracellular" evidence="2">
    <location>
        <begin position="149"/>
        <end position="166"/>
    </location>
</feature>
<feature type="transmembrane region" description="Helical" evidence="2">
    <location>
        <begin position="167"/>
        <end position="187"/>
    </location>
</feature>
<feature type="topological domain" description="Cytoplasmic" evidence="2">
    <location>
        <begin position="188"/>
        <end position="193"/>
    </location>
</feature>
<feature type="transmembrane region" description="Helical" evidence="2">
    <location>
        <begin position="194"/>
        <end position="214"/>
    </location>
</feature>
<feature type="topological domain" description="Extracellular" evidence="2">
    <location>
        <begin position="215"/>
        <end position="239"/>
    </location>
</feature>
<feature type="transmembrane region" description="Helical" evidence="2">
    <location>
        <begin position="240"/>
        <end position="260"/>
    </location>
</feature>
<feature type="topological domain" description="Cytoplasmic" evidence="2">
    <location>
        <begin position="261"/>
        <end position="276"/>
    </location>
</feature>
<feature type="transmembrane region" description="Helical" evidence="2">
    <location>
        <begin position="277"/>
        <end position="297"/>
    </location>
</feature>
<feature type="topological domain" description="Extracellular" evidence="2">
    <location>
        <begin position="298"/>
        <end position="319"/>
    </location>
</feature>
<feature type="transmembrane region" description="Helical" evidence="2">
    <location>
        <begin position="320"/>
        <end position="340"/>
    </location>
</feature>
<feature type="topological domain" description="Cytoplasmic" evidence="2">
    <location>
        <begin position="341"/>
        <end position="378"/>
    </location>
</feature>
<feature type="transmembrane region" description="Helical" evidence="2">
    <location>
        <begin position="379"/>
        <end position="399"/>
    </location>
</feature>
<feature type="topological domain" description="Extracellular" evidence="2">
    <location>
        <begin position="400"/>
        <end position="408"/>
    </location>
</feature>
<feature type="transmembrane region" description="Helical" evidence="2">
    <location>
        <begin position="409"/>
        <end position="429"/>
    </location>
</feature>
<feature type="topological domain" description="Cytoplasmic" evidence="2">
    <location>
        <begin position="430"/>
        <end position="437"/>
    </location>
</feature>
<feature type="transmembrane region" description="Helical" evidence="2">
    <location>
        <begin position="438"/>
        <end position="458"/>
    </location>
</feature>
<feature type="topological domain" description="Extracellular" evidence="2">
    <location>
        <begin position="459"/>
        <end position="487"/>
    </location>
</feature>
<feature type="transmembrane region" description="Helical" evidence="2">
    <location>
        <begin position="488"/>
        <end position="508"/>
    </location>
</feature>
<feature type="topological domain" description="Cytoplasmic" evidence="2">
    <location>
        <begin position="509"/>
        <end position="584"/>
    </location>
</feature>
<feature type="glycosylation site" description="N-linked (GlcNAc...) asparagine" evidence="2">
    <location>
        <position position="303"/>
    </location>
</feature>
<accession>Q8UWF0</accession>
<comment type="function">
    <text evidence="3">Imports choline from the extracellular space to the neuron with high affinity. Rate-limiting step in acetylcholine synthesis. Sodium ion and chloride ion dependent.</text>
</comment>
<comment type="subcellular location">
    <subcellularLocation>
        <location evidence="1">Membrane</location>
        <topology evidence="1">Multi-pass membrane protein</topology>
    </subcellularLocation>
</comment>
<comment type="tissue specificity">
    <text evidence="3">Specific for cholinergic neurons.</text>
</comment>
<comment type="PTM">
    <text evidence="1">Phosphorylated.</text>
</comment>
<comment type="miscellaneous">
    <text>Specifically inhibited by nanomolar concentrations of hemicholinium 3.</text>
</comment>
<comment type="similarity">
    <text evidence="4">Belongs to the sodium:solute symporter (SSF) (TC 2.A.21) family.</text>
</comment>
<proteinExistence type="evidence at transcript level"/>